<feature type="chain" id="PRO_0000131486" description="Small ribosomal subunit protein uS5">
    <location>
        <begin position="1"/>
        <end position="166"/>
    </location>
</feature>
<feature type="domain" description="S5 DRBM" evidence="1">
    <location>
        <begin position="11"/>
        <end position="74"/>
    </location>
</feature>
<protein>
    <recommendedName>
        <fullName evidence="1">Small ribosomal subunit protein uS5</fullName>
    </recommendedName>
    <alternativeName>
        <fullName evidence="2">30S ribosomal protein S5</fullName>
    </alternativeName>
</protein>
<evidence type="ECO:0000255" key="1">
    <source>
        <dbReference type="HAMAP-Rule" id="MF_01307"/>
    </source>
</evidence>
<evidence type="ECO:0000305" key="2"/>
<comment type="function">
    <text evidence="1">With S4 and S12 plays an important role in translational accuracy.</text>
</comment>
<comment type="function">
    <text evidence="1">Located at the back of the 30S subunit body where it stabilizes the conformation of the head with respect to the body.</text>
</comment>
<comment type="subunit">
    <text evidence="1">Part of the 30S ribosomal subunit. Contacts proteins S4 and S8.</text>
</comment>
<comment type="domain">
    <text>The N-terminal domain interacts with the head of the 30S subunit; the C-terminal domain interacts with the body and contacts protein S4. The interaction surface between S4 and S5 is involved in control of translational fidelity.</text>
</comment>
<comment type="miscellaneous">
    <text>Fifteen X have been added to this sequence so that it corresponds better to orthologs from other subspecies of Buchnera aphidicola.</text>
</comment>
<comment type="similarity">
    <text evidence="1">Belongs to the universal ribosomal protein uS5 family.</text>
</comment>
<organism>
    <name type="scientific">Buchnera aphidicola subsp. Acyrthosiphon kondoi</name>
    <name type="common">Acyrthosiphon kondoi symbiotic bacterium</name>
    <dbReference type="NCBI Taxonomy" id="42474"/>
    <lineage>
        <taxon>Bacteria</taxon>
        <taxon>Pseudomonadati</taxon>
        <taxon>Pseudomonadota</taxon>
        <taxon>Gammaproteobacteria</taxon>
        <taxon>Enterobacterales</taxon>
        <taxon>Erwiniaceae</taxon>
        <taxon>Buchnera</taxon>
    </lineage>
</organism>
<accession>P46183</accession>
<accession>Q44082</accession>
<dbReference type="EMBL" id="D31786">
    <property type="protein sequence ID" value="BAA06592.1"/>
    <property type="status" value="ALT_SEQ"/>
    <property type="molecule type" value="Genomic_DNA"/>
</dbReference>
<dbReference type="EMBL" id="D16555">
    <property type="protein sequence ID" value="BAA03984.1"/>
    <property type="molecule type" value="Genomic_DNA"/>
</dbReference>
<dbReference type="PIR" id="JC2283">
    <property type="entry name" value="JC2283"/>
</dbReference>
<dbReference type="GO" id="GO:0015935">
    <property type="term" value="C:small ribosomal subunit"/>
    <property type="evidence" value="ECO:0007669"/>
    <property type="project" value="InterPro"/>
</dbReference>
<dbReference type="GO" id="GO:0019843">
    <property type="term" value="F:rRNA binding"/>
    <property type="evidence" value="ECO:0007669"/>
    <property type="project" value="UniProtKB-UniRule"/>
</dbReference>
<dbReference type="GO" id="GO:0003735">
    <property type="term" value="F:structural constituent of ribosome"/>
    <property type="evidence" value="ECO:0007669"/>
    <property type="project" value="InterPro"/>
</dbReference>
<dbReference type="GO" id="GO:0006412">
    <property type="term" value="P:translation"/>
    <property type="evidence" value="ECO:0007669"/>
    <property type="project" value="UniProtKB-UniRule"/>
</dbReference>
<dbReference type="FunFam" id="3.30.160.20:FF:000001">
    <property type="entry name" value="30S ribosomal protein S5"/>
    <property type="match status" value="1"/>
</dbReference>
<dbReference type="FunFam" id="3.30.230.10:FF:000002">
    <property type="entry name" value="30S ribosomal protein S5"/>
    <property type="match status" value="1"/>
</dbReference>
<dbReference type="Gene3D" id="3.30.160.20">
    <property type="match status" value="1"/>
</dbReference>
<dbReference type="Gene3D" id="3.30.230.10">
    <property type="match status" value="1"/>
</dbReference>
<dbReference type="HAMAP" id="MF_01307_B">
    <property type="entry name" value="Ribosomal_uS5_B"/>
    <property type="match status" value="1"/>
</dbReference>
<dbReference type="InterPro" id="IPR020568">
    <property type="entry name" value="Ribosomal_Su5_D2-typ_SF"/>
</dbReference>
<dbReference type="InterPro" id="IPR000851">
    <property type="entry name" value="Ribosomal_uS5"/>
</dbReference>
<dbReference type="InterPro" id="IPR005712">
    <property type="entry name" value="Ribosomal_uS5_bac-type"/>
</dbReference>
<dbReference type="InterPro" id="IPR005324">
    <property type="entry name" value="Ribosomal_uS5_C"/>
</dbReference>
<dbReference type="InterPro" id="IPR013810">
    <property type="entry name" value="Ribosomal_uS5_N"/>
</dbReference>
<dbReference type="InterPro" id="IPR018192">
    <property type="entry name" value="Ribosomal_uS5_N_CS"/>
</dbReference>
<dbReference type="InterPro" id="IPR014721">
    <property type="entry name" value="Ribsml_uS5_D2-typ_fold_subgr"/>
</dbReference>
<dbReference type="NCBIfam" id="TIGR01021">
    <property type="entry name" value="rpsE_bact"/>
    <property type="match status" value="1"/>
</dbReference>
<dbReference type="PANTHER" id="PTHR48277">
    <property type="entry name" value="MITOCHONDRIAL RIBOSOMAL PROTEIN S5"/>
    <property type="match status" value="1"/>
</dbReference>
<dbReference type="PANTHER" id="PTHR48277:SF1">
    <property type="entry name" value="MITOCHONDRIAL RIBOSOMAL PROTEIN S5"/>
    <property type="match status" value="1"/>
</dbReference>
<dbReference type="Pfam" id="PF00333">
    <property type="entry name" value="Ribosomal_S5"/>
    <property type="match status" value="1"/>
</dbReference>
<dbReference type="Pfam" id="PF03719">
    <property type="entry name" value="Ribosomal_S5_C"/>
    <property type="match status" value="1"/>
</dbReference>
<dbReference type="SUPFAM" id="SSF54768">
    <property type="entry name" value="dsRNA-binding domain-like"/>
    <property type="match status" value="1"/>
</dbReference>
<dbReference type="SUPFAM" id="SSF54211">
    <property type="entry name" value="Ribosomal protein S5 domain 2-like"/>
    <property type="match status" value="1"/>
</dbReference>
<dbReference type="PROSITE" id="PS00585">
    <property type="entry name" value="RIBOSOMAL_S5"/>
    <property type="match status" value="1"/>
</dbReference>
<dbReference type="PROSITE" id="PS50881">
    <property type="entry name" value="S5_DSRBD"/>
    <property type="match status" value="1"/>
</dbReference>
<name>RS5_BUCAK</name>
<sequence>MAHIEKQAGELQEKLIAVNRVSKTVKGGRIFSFTALTVVGDGNGRVGFGYGKAREVPAAIQKAMEKARRNMMNVALNSGTLQHPVKGAHTGSRVFMQPASEGTGIIAGGAMXXXXXXXXXXXXXXXAYGSTNPINVVRATIDALANMKSPEMVAAKLGKSVADILG</sequence>
<reference key="1">
    <citation type="journal article" date="1994" name="DNA Res.">
        <title>Cloning and characterization of the ribosomal protein genes in the spc operon of a prokaryotic endosymbiont of the pea aphid, Acyrthosiphon kondoi.</title>
        <authorList>
            <person name="Abe R."/>
            <person name="Yamashita A."/>
            <person name="Isono K."/>
        </authorList>
    </citation>
    <scope>NUCLEOTIDE SEQUENCE [GENOMIC DNA]</scope>
    <source>
        <strain>Kurashiki</strain>
    </source>
</reference>
<proteinExistence type="inferred from homology"/>
<gene>
    <name evidence="1" type="primary">rpsE</name>
</gene>
<keyword id="KW-0687">Ribonucleoprotein</keyword>
<keyword id="KW-0689">Ribosomal protein</keyword>
<keyword id="KW-0694">RNA-binding</keyword>
<keyword id="KW-0699">rRNA-binding</keyword>